<reference key="1">
    <citation type="journal article" date="2008" name="Genome Res.">
        <title>Comparative genome analysis of Salmonella enteritidis PT4 and Salmonella gallinarum 287/91 provides insights into evolutionary and host adaptation pathways.</title>
        <authorList>
            <person name="Thomson N.R."/>
            <person name="Clayton D.J."/>
            <person name="Windhorst D."/>
            <person name="Vernikos G."/>
            <person name="Davidson S."/>
            <person name="Churcher C."/>
            <person name="Quail M.A."/>
            <person name="Stevens M."/>
            <person name="Jones M.A."/>
            <person name="Watson M."/>
            <person name="Barron A."/>
            <person name="Layton A."/>
            <person name="Pickard D."/>
            <person name="Kingsley R.A."/>
            <person name="Bignell A."/>
            <person name="Clark L."/>
            <person name="Harris B."/>
            <person name="Ormond D."/>
            <person name="Abdellah Z."/>
            <person name="Brooks K."/>
            <person name="Cherevach I."/>
            <person name="Chillingworth T."/>
            <person name="Woodward J."/>
            <person name="Norberczak H."/>
            <person name="Lord A."/>
            <person name="Arrowsmith C."/>
            <person name="Jagels K."/>
            <person name="Moule S."/>
            <person name="Mungall K."/>
            <person name="Saunders M."/>
            <person name="Whitehead S."/>
            <person name="Chabalgoity J.A."/>
            <person name="Maskell D."/>
            <person name="Humphreys T."/>
            <person name="Roberts M."/>
            <person name="Barrow P.A."/>
            <person name="Dougan G."/>
            <person name="Parkhill J."/>
        </authorList>
    </citation>
    <scope>NUCLEOTIDE SEQUENCE [LARGE SCALE GENOMIC DNA]</scope>
    <source>
        <strain>P125109</strain>
    </source>
</reference>
<name>FSA_SALEP</name>
<feature type="chain" id="PRO_1000126375" description="Fructose-6-phosphate aldolase">
    <location>
        <begin position="1"/>
        <end position="220"/>
    </location>
</feature>
<feature type="active site" description="Schiff-base intermediate with substrate" evidence="1">
    <location>
        <position position="85"/>
    </location>
</feature>
<keyword id="KW-0119">Carbohydrate metabolism</keyword>
<keyword id="KW-0963">Cytoplasm</keyword>
<keyword id="KW-0456">Lyase</keyword>
<keyword id="KW-0704">Schiff base</keyword>
<comment type="function">
    <text evidence="1">Catalyzes the reversible formation of fructose 6-phosphate from dihydroxyacetone and D-glyceraldehyde 3-phosphate via an aldolization reaction.</text>
</comment>
<comment type="catalytic activity">
    <reaction evidence="1">
        <text>beta-D-fructose 6-phosphate = dihydroxyacetone + D-glyceraldehyde 3-phosphate</text>
        <dbReference type="Rhea" id="RHEA:28002"/>
        <dbReference type="ChEBI" id="CHEBI:16016"/>
        <dbReference type="ChEBI" id="CHEBI:57634"/>
        <dbReference type="ChEBI" id="CHEBI:59776"/>
    </reaction>
</comment>
<comment type="subunit">
    <text evidence="1">Homodecamer.</text>
</comment>
<comment type="subcellular location">
    <subcellularLocation>
        <location evidence="1">Cytoplasm</location>
    </subcellularLocation>
</comment>
<comment type="similarity">
    <text evidence="1">Belongs to the transaldolase family. Type 3A subfamily.</text>
</comment>
<sequence>MELYLDTANVAEVERLARIFPIAGVTTNPSIVAASKESIWDVLPRLQNAIGEEGTLFAQTMSRDAKGMVEEAKRLNNAIPGIVVKIPVTAEGLAAIKLLKKEGIVTLGTAVYSASQGLLAALAGAKYVAPYVNRVDAQGGDGIRMVQELQTLLEHHAPDSMVLAASFKTPRQALDCLLAGCQAITLPLDVAQQMLNTPAVESAIEKFEQDWKNAFGNLNL</sequence>
<organism>
    <name type="scientific">Salmonella enteritidis PT4 (strain P125109)</name>
    <dbReference type="NCBI Taxonomy" id="550537"/>
    <lineage>
        <taxon>Bacteria</taxon>
        <taxon>Pseudomonadati</taxon>
        <taxon>Pseudomonadota</taxon>
        <taxon>Gammaproteobacteria</taxon>
        <taxon>Enterobacterales</taxon>
        <taxon>Enterobacteriaceae</taxon>
        <taxon>Salmonella</taxon>
    </lineage>
</organism>
<dbReference type="EC" id="4.1.2.-" evidence="1"/>
<dbReference type="EMBL" id="AM933172">
    <property type="protein sequence ID" value="CAR35477.1"/>
    <property type="molecule type" value="Genomic_DNA"/>
</dbReference>
<dbReference type="RefSeq" id="WP_000424866.1">
    <property type="nucleotide sequence ID" value="NC_011294.1"/>
</dbReference>
<dbReference type="SMR" id="B5QXP2"/>
<dbReference type="KEGG" id="set:SEN3903"/>
<dbReference type="HOGENOM" id="CLU_079764_2_0_6"/>
<dbReference type="Proteomes" id="UP000000613">
    <property type="component" value="Chromosome"/>
</dbReference>
<dbReference type="GO" id="GO:0005737">
    <property type="term" value="C:cytoplasm"/>
    <property type="evidence" value="ECO:0007669"/>
    <property type="project" value="UniProtKB-SubCell"/>
</dbReference>
<dbReference type="GO" id="GO:0097023">
    <property type="term" value="F:fructose 6-phosphate aldolase activity"/>
    <property type="evidence" value="ECO:0007669"/>
    <property type="project" value="RHEA"/>
</dbReference>
<dbReference type="GO" id="GO:0006000">
    <property type="term" value="P:fructose metabolic process"/>
    <property type="evidence" value="ECO:0007669"/>
    <property type="project" value="UniProtKB-UniRule"/>
</dbReference>
<dbReference type="CDD" id="cd00956">
    <property type="entry name" value="Transaldolase_FSA"/>
    <property type="match status" value="1"/>
</dbReference>
<dbReference type="FunFam" id="3.20.20.70:FF:000018">
    <property type="entry name" value="Probable transaldolase"/>
    <property type="match status" value="1"/>
</dbReference>
<dbReference type="Gene3D" id="3.20.20.70">
    <property type="entry name" value="Aldolase class I"/>
    <property type="match status" value="1"/>
</dbReference>
<dbReference type="HAMAP" id="MF_00496">
    <property type="entry name" value="F6P_aldolase"/>
    <property type="match status" value="1"/>
</dbReference>
<dbReference type="InterPro" id="IPR013785">
    <property type="entry name" value="Aldolase_TIM"/>
</dbReference>
<dbReference type="InterPro" id="IPR023001">
    <property type="entry name" value="F6P_aldolase"/>
</dbReference>
<dbReference type="InterPro" id="IPR001585">
    <property type="entry name" value="TAL/FSA"/>
</dbReference>
<dbReference type="InterPro" id="IPR004731">
    <property type="entry name" value="Transaldolase_3B/F6P_aldolase"/>
</dbReference>
<dbReference type="InterPro" id="IPR018225">
    <property type="entry name" value="Transaldolase_AS"/>
</dbReference>
<dbReference type="InterPro" id="IPR033919">
    <property type="entry name" value="TSA/FSA_arc/bac"/>
</dbReference>
<dbReference type="NCBIfam" id="TIGR00875">
    <property type="entry name" value="fsa_talC_mipB"/>
    <property type="match status" value="1"/>
</dbReference>
<dbReference type="NCBIfam" id="NF009296">
    <property type="entry name" value="PRK12653.1"/>
    <property type="match status" value="1"/>
</dbReference>
<dbReference type="PANTHER" id="PTHR10683:SF40">
    <property type="entry name" value="FRUCTOSE-6-PHOSPHATE ALDOLASE 1-RELATED"/>
    <property type="match status" value="1"/>
</dbReference>
<dbReference type="PANTHER" id="PTHR10683">
    <property type="entry name" value="TRANSALDOLASE"/>
    <property type="match status" value="1"/>
</dbReference>
<dbReference type="Pfam" id="PF00923">
    <property type="entry name" value="TAL_FSA"/>
    <property type="match status" value="1"/>
</dbReference>
<dbReference type="SUPFAM" id="SSF51569">
    <property type="entry name" value="Aldolase"/>
    <property type="match status" value="1"/>
</dbReference>
<dbReference type="PROSITE" id="PS01054">
    <property type="entry name" value="TRANSALDOLASE_1"/>
    <property type="match status" value="1"/>
</dbReference>
<dbReference type="PROSITE" id="PS00958">
    <property type="entry name" value="TRANSALDOLASE_2"/>
    <property type="match status" value="1"/>
</dbReference>
<protein>
    <recommendedName>
        <fullName evidence="1">Fructose-6-phosphate aldolase</fullName>
        <ecNumber evidence="1">4.1.2.-</ecNumber>
    </recommendedName>
</protein>
<accession>B5QXP2</accession>
<gene>
    <name evidence="1" type="primary">fsa</name>
    <name type="ordered locus">SEN3903</name>
</gene>
<proteinExistence type="inferred from homology"/>
<evidence type="ECO:0000255" key="1">
    <source>
        <dbReference type="HAMAP-Rule" id="MF_00496"/>
    </source>
</evidence>